<protein>
    <recommendedName>
        <fullName>Chorion class A protein Ld2/Ld41</fullName>
    </recommendedName>
</protein>
<name>CHA2A_LYMDI</name>
<accession>P0C0U2</accession>
<accession>P43512</accession>
<proteinExistence type="evidence at transcript level"/>
<dbReference type="EMBL" id="U04658">
    <property type="protein sequence ID" value="AAA67858.1"/>
    <property type="molecule type" value="mRNA"/>
</dbReference>
<dbReference type="GO" id="GO:0042600">
    <property type="term" value="C:egg chorion"/>
    <property type="evidence" value="ECO:0007669"/>
    <property type="project" value="InterPro"/>
</dbReference>
<dbReference type="GO" id="GO:0005213">
    <property type="term" value="F:structural constituent of egg chorion"/>
    <property type="evidence" value="ECO:0007669"/>
    <property type="project" value="InterPro"/>
</dbReference>
<dbReference type="GO" id="GO:0007304">
    <property type="term" value="P:chorion-containing eggshell formation"/>
    <property type="evidence" value="ECO:0007669"/>
    <property type="project" value="InterPro"/>
</dbReference>
<dbReference type="InterPro" id="IPR002635">
    <property type="entry name" value="Chorion"/>
</dbReference>
<dbReference type="Pfam" id="PF01723">
    <property type="entry name" value="Chorion_1"/>
    <property type="match status" value="1"/>
</dbReference>
<sequence length="140" mass="13855">MNSFAFLLVCIQACLVQSVFSQCTSRAAVAADRGIIGGYGLGAPYGLGCGYGLEAPYGWAGYADYGYGLDAYGGIGEGNVAVAGELPVAGTTAVAGQVPIMGAVKFGGDVCAAGSVSIAGKCDCGCGEVYGYGLGAPYLY</sequence>
<reference key="1">
    <citation type="journal article" date="1994" name="J. Mol. Evol.">
        <title>Evolution of chorion gene families in lepidoptera: characterization of 15 cDNAs from the gypsy moth.</title>
        <authorList>
            <person name="Leclerc R.F."/>
            <person name="Regier J.C."/>
        </authorList>
    </citation>
    <scope>NUCLEOTIDE SEQUENCE [MRNA]</scope>
    <source>
        <tissue>Choriogenic follicle</tissue>
    </source>
</reference>
<organism>
    <name type="scientific">Lymantria dispar</name>
    <name type="common">Gypsy moth</name>
    <name type="synonym">Porthetria dispar</name>
    <dbReference type="NCBI Taxonomy" id="13123"/>
    <lineage>
        <taxon>Eukaryota</taxon>
        <taxon>Metazoa</taxon>
        <taxon>Ecdysozoa</taxon>
        <taxon>Arthropoda</taxon>
        <taxon>Hexapoda</taxon>
        <taxon>Insecta</taxon>
        <taxon>Pterygota</taxon>
        <taxon>Neoptera</taxon>
        <taxon>Endopterygota</taxon>
        <taxon>Lepidoptera</taxon>
        <taxon>Glossata</taxon>
        <taxon>Ditrysia</taxon>
        <taxon>Noctuoidea</taxon>
        <taxon>Erebidae</taxon>
        <taxon>Lymantriinae</taxon>
        <taxon>Lymantria</taxon>
    </lineage>
</organism>
<feature type="signal peptide" evidence="1">
    <location>
        <begin position="1"/>
        <end position="21"/>
    </location>
</feature>
<feature type="chain" id="PRO_0000005389" description="Chorion class A protein Ld2/Ld41">
    <location>
        <begin position="22"/>
        <end position="140"/>
    </location>
</feature>
<keyword id="KW-0677">Repeat</keyword>
<keyword id="KW-0732">Signal</keyword>
<comment type="function">
    <text>This protein is one of many from the eggshell of the gypsy moth.</text>
</comment>
<comment type="similarity">
    <text evidence="2">Belongs to the chorion protein family.</text>
</comment>
<evidence type="ECO:0000255" key="1"/>
<evidence type="ECO:0000305" key="2"/>